<organism>
    <name type="scientific">Vibrio cholerae serotype O1 (strain ATCC 39315 / El Tor Inaba N16961)</name>
    <dbReference type="NCBI Taxonomy" id="243277"/>
    <lineage>
        <taxon>Bacteria</taxon>
        <taxon>Pseudomonadati</taxon>
        <taxon>Pseudomonadota</taxon>
        <taxon>Gammaproteobacteria</taxon>
        <taxon>Vibrionales</taxon>
        <taxon>Vibrionaceae</taxon>
        <taxon>Vibrio</taxon>
    </lineage>
</organism>
<accession>Q9KMG3</accession>
<gene>
    <name type="ordered locus">VC_A0395</name>
</gene>
<dbReference type="EC" id="5.1.-.-"/>
<dbReference type="EMBL" id="AE003853">
    <property type="protein sequence ID" value="AAF96301.1"/>
    <property type="molecule type" value="Genomic_DNA"/>
</dbReference>
<dbReference type="PIR" id="F82463">
    <property type="entry name" value="F82463"/>
</dbReference>
<dbReference type="RefSeq" id="NP_232789.1">
    <property type="nucleotide sequence ID" value="NC_002506.1"/>
</dbReference>
<dbReference type="SMR" id="Q9KMG3"/>
<dbReference type="STRING" id="243277.VC_A0395"/>
<dbReference type="DNASU" id="2612424"/>
<dbReference type="EnsemblBacteria" id="AAF96301">
    <property type="protein sequence ID" value="AAF96301"/>
    <property type="gene ID" value="VC_A0395"/>
</dbReference>
<dbReference type="KEGG" id="vch:VC_A0395"/>
<dbReference type="PATRIC" id="fig|243277.26.peg.3025"/>
<dbReference type="eggNOG" id="COG0384">
    <property type="taxonomic scope" value="Bacteria"/>
</dbReference>
<dbReference type="HOGENOM" id="CLU_048756_2_2_6"/>
<dbReference type="Proteomes" id="UP000000584">
    <property type="component" value="Chromosome 2"/>
</dbReference>
<dbReference type="GO" id="GO:0005737">
    <property type="term" value="C:cytoplasm"/>
    <property type="evidence" value="ECO:0000318"/>
    <property type="project" value="GO_Central"/>
</dbReference>
<dbReference type="GO" id="GO:0016853">
    <property type="term" value="F:isomerase activity"/>
    <property type="evidence" value="ECO:0000318"/>
    <property type="project" value="GO_Central"/>
</dbReference>
<dbReference type="GO" id="GO:0009058">
    <property type="term" value="P:biosynthetic process"/>
    <property type="evidence" value="ECO:0007669"/>
    <property type="project" value="InterPro"/>
</dbReference>
<dbReference type="AntiFam" id="ANF00278">
    <property type="entry name" value="Spurious ORF motif from attC repeats"/>
</dbReference>
<dbReference type="Gene3D" id="3.10.310.10">
    <property type="entry name" value="Diaminopimelate Epimerase, Chain A, domain 1"/>
    <property type="match status" value="2"/>
</dbReference>
<dbReference type="InterPro" id="IPR003719">
    <property type="entry name" value="Phenazine_PhzF-like"/>
</dbReference>
<dbReference type="NCBIfam" id="NF041952">
    <property type="entry name" value="super_attC_Vc_1"/>
    <property type="match status" value="1"/>
</dbReference>
<dbReference type="PANTHER" id="PTHR13774">
    <property type="entry name" value="PHENAZINE BIOSYNTHESIS PROTEIN"/>
    <property type="match status" value="1"/>
</dbReference>
<dbReference type="PANTHER" id="PTHR13774:SF17">
    <property type="entry name" value="PHENAZINE BIOSYNTHESIS-LIKE DOMAIN-CONTAINING PROTEIN"/>
    <property type="match status" value="1"/>
</dbReference>
<dbReference type="Pfam" id="PF02567">
    <property type="entry name" value="PhzC-PhzF"/>
    <property type="match status" value="1"/>
</dbReference>
<dbReference type="PIRSF" id="PIRSF016184">
    <property type="entry name" value="PhzC_PhzF"/>
    <property type="match status" value="1"/>
</dbReference>
<dbReference type="SUPFAM" id="SSF54506">
    <property type="entry name" value="Diaminopimelate epimerase-like"/>
    <property type="match status" value="1"/>
</dbReference>
<feature type="chain" id="PRO_0000162402" description="Uncharacterized isomerase VC_A0395">
    <location>
        <begin position="1"/>
        <end position="279"/>
    </location>
</feature>
<sequence>MLCLGLVVMRCQPLRRALNCSQGWWIIKIDIYDVFIGKSAFGNPCGVLELNGWLSDSELHQITREVGQPVTSFITHVDGRFHIRWFALDGEINLCGHGSLGAGAAILSKYQLENVVFNSKYGEVVISKRDDQYSLVLPSWEAKPCAVPVEISDLATDAIDVFSTRDLVLVLPSVEAVMNFQPDDDRLREINEYHALIVTAANGNSGYVLRYFAPKIGISEDLATGSAQCSLAPYWFKKLGSDALNARQLSMSGGYFEVERTTENSITVFAQAKRRAIAI</sequence>
<evidence type="ECO:0000305" key="1"/>
<name>Y3195_VIBCH</name>
<comment type="similarity">
    <text evidence="1">Belongs to the PhzF family.</text>
</comment>
<keyword id="KW-0413">Isomerase</keyword>
<keyword id="KW-1185">Reference proteome</keyword>
<proteinExistence type="inferred from homology"/>
<reference key="1">
    <citation type="journal article" date="2000" name="Nature">
        <title>DNA sequence of both chromosomes of the cholera pathogen Vibrio cholerae.</title>
        <authorList>
            <person name="Heidelberg J.F."/>
            <person name="Eisen J.A."/>
            <person name="Nelson W.C."/>
            <person name="Clayton R.A."/>
            <person name="Gwinn M.L."/>
            <person name="Dodson R.J."/>
            <person name="Haft D.H."/>
            <person name="Hickey E.K."/>
            <person name="Peterson J.D."/>
            <person name="Umayam L.A."/>
            <person name="Gill S.R."/>
            <person name="Nelson K.E."/>
            <person name="Read T.D."/>
            <person name="Tettelin H."/>
            <person name="Richardson D.L."/>
            <person name="Ermolaeva M.D."/>
            <person name="Vamathevan J.J."/>
            <person name="Bass S."/>
            <person name="Qin H."/>
            <person name="Dragoi I."/>
            <person name="Sellers P."/>
            <person name="McDonald L.A."/>
            <person name="Utterback T.R."/>
            <person name="Fleischmann R.D."/>
            <person name="Nierman W.C."/>
            <person name="White O."/>
            <person name="Salzberg S.L."/>
            <person name="Smith H.O."/>
            <person name="Colwell R.R."/>
            <person name="Mekalanos J.J."/>
            <person name="Venter J.C."/>
            <person name="Fraser C.M."/>
        </authorList>
    </citation>
    <scope>NUCLEOTIDE SEQUENCE [LARGE SCALE GENOMIC DNA]</scope>
    <source>
        <strain>ATCC 39315 / El Tor Inaba N16961</strain>
    </source>
</reference>
<protein>
    <recommendedName>
        <fullName>Uncharacterized isomerase VC_A0395</fullName>
        <ecNumber>5.1.-.-</ecNumber>
    </recommendedName>
</protein>